<accession>B3H161</accession>
<reference key="1">
    <citation type="submission" date="2008-06" db="EMBL/GenBank/DDBJ databases">
        <title>Genome and proteome analysis of A. pleuropneumoniae serotype 7.</title>
        <authorList>
            <person name="Linke B."/>
            <person name="Buettner F."/>
            <person name="Martinez-Arias R."/>
            <person name="Goesmann A."/>
            <person name="Baltes N."/>
            <person name="Tegetmeyer H."/>
            <person name="Singh M."/>
            <person name="Gerlach G.F."/>
        </authorList>
    </citation>
    <scope>NUCLEOTIDE SEQUENCE [LARGE SCALE GENOMIC DNA]</scope>
    <source>
        <strain>AP76</strain>
    </source>
</reference>
<sequence length="153" mass="17395">MATLEQKLEELVSDTIESMGFELVGIECQRAGRFLTVRLYIDKEGGVTIDDCSDVSRQVSAILDVEDPIADKYNLEVSSPGLDRPLFTLAHYQRFIGQEIVIHLRIPMFDRRKWQGKLESVEGDLITLTVDNETRQFAFGNIQKANLVPVFNF</sequence>
<feature type="chain" id="PRO_1000136727" description="Ribosome maturation factor RimP">
    <location>
        <begin position="1"/>
        <end position="153"/>
    </location>
</feature>
<protein>
    <recommendedName>
        <fullName evidence="1">Ribosome maturation factor RimP</fullName>
    </recommendedName>
</protein>
<organism>
    <name type="scientific">Actinobacillus pleuropneumoniae serotype 7 (strain AP76)</name>
    <dbReference type="NCBI Taxonomy" id="537457"/>
    <lineage>
        <taxon>Bacteria</taxon>
        <taxon>Pseudomonadati</taxon>
        <taxon>Pseudomonadota</taxon>
        <taxon>Gammaproteobacteria</taxon>
        <taxon>Pasteurellales</taxon>
        <taxon>Pasteurellaceae</taxon>
        <taxon>Actinobacillus</taxon>
    </lineage>
</organism>
<gene>
    <name evidence="1" type="primary">rimP</name>
    <name type="ordered locus">APP7_0678</name>
</gene>
<keyword id="KW-0963">Cytoplasm</keyword>
<keyword id="KW-0690">Ribosome biogenesis</keyword>
<proteinExistence type="inferred from homology"/>
<evidence type="ECO:0000255" key="1">
    <source>
        <dbReference type="HAMAP-Rule" id="MF_01077"/>
    </source>
</evidence>
<dbReference type="EMBL" id="CP001091">
    <property type="protein sequence ID" value="ACE61330.1"/>
    <property type="molecule type" value="Genomic_DNA"/>
</dbReference>
<dbReference type="RefSeq" id="WP_005604037.1">
    <property type="nucleotide sequence ID" value="NC_010939.1"/>
</dbReference>
<dbReference type="SMR" id="B3H161"/>
<dbReference type="KEGG" id="apa:APP7_0678"/>
<dbReference type="HOGENOM" id="CLU_070525_1_1_6"/>
<dbReference type="Proteomes" id="UP000001226">
    <property type="component" value="Chromosome"/>
</dbReference>
<dbReference type="GO" id="GO:0005829">
    <property type="term" value="C:cytosol"/>
    <property type="evidence" value="ECO:0007669"/>
    <property type="project" value="TreeGrafter"/>
</dbReference>
<dbReference type="GO" id="GO:0000028">
    <property type="term" value="P:ribosomal small subunit assembly"/>
    <property type="evidence" value="ECO:0007669"/>
    <property type="project" value="TreeGrafter"/>
</dbReference>
<dbReference type="GO" id="GO:0006412">
    <property type="term" value="P:translation"/>
    <property type="evidence" value="ECO:0007669"/>
    <property type="project" value="TreeGrafter"/>
</dbReference>
<dbReference type="CDD" id="cd01734">
    <property type="entry name" value="YlxS_C"/>
    <property type="match status" value="1"/>
</dbReference>
<dbReference type="FunFam" id="3.30.300.70:FF:000001">
    <property type="entry name" value="Ribosome maturation factor RimP"/>
    <property type="match status" value="1"/>
</dbReference>
<dbReference type="Gene3D" id="2.30.30.180">
    <property type="entry name" value="Ribosome maturation factor RimP, C-terminal domain"/>
    <property type="match status" value="1"/>
</dbReference>
<dbReference type="Gene3D" id="3.30.300.70">
    <property type="entry name" value="RimP-like superfamily, N-terminal"/>
    <property type="match status" value="1"/>
</dbReference>
<dbReference type="HAMAP" id="MF_01077">
    <property type="entry name" value="RimP"/>
    <property type="match status" value="1"/>
</dbReference>
<dbReference type="InterPro" id="IPR003728">
    <property type="entry name" value="Ribosome_maturation_RimP"/>
</dbReference>
<dbReference type="InterPro" id="IPR028998">
    <property type="entry name" value="RimP_C"/>
</dbReference>
<dbReference type="InterPro" id="IPR036847">
    <property type="entry name" value="RimP_C_sf"/>
</dbReference>
<dbReference type="InterPro" id="IPR028989">
    <property type="entry name" value="RimP_N"/>
</dbReference>
<dbReference type="InterPro" id="IPR035956">
    <property type="entry name" value="RimP_N_sf"/>
</dbReference>
<dbReference type="NCBIfam" id="NF000927">
    <property type="entry name" value="PRK00092.1-1"/>
    <property type="match status" value="1"/>
</dbReference>
<dbReference type="PANTHER" id="PTHR33867">
    <property type="entry name" value="RIBOSOME MATURATION FACTOR RIMP"/>
    <property type="match status" value="1"/>
</dbReference>
<dbReference type="PANTHER" id="PTHR33867:SF1">
    <property type="entry name" value="RIBOSOME MATURATION FACTOR RIMP"/>
    <property type="match status" value="1"/>
</dbReference>
<dbReference type="Pfam" id="PF17384">
    <property type="entry name" value="DUF150_C"/>
    <property type="match status" value="1"/>
</dbReference>
<dbReference type="Pfam" id="PF02576">
    <property type="entry name" value="RimP_N"/>
    <property type="match status" value="1"/>
</dbReference>
<dbReference type="SUPFAM" id="SSF74942">
    <property type="entry name" value="YhbC-like, C-terminal domain"/>
    <property type="match status" value="1"/>
</dbReference>
<dbReference type="SUPFAM" id="SSF75420">
    <property type="entry name" value="YhbC-like, N-terminal domain"/>
    <property type="match status" value="1"/>
</dbReference>
<comment type="function">
    <text evidence="1">Required for maturation of 30S ribosomal subunits.</text>
</comment>
<comment type="subcellular location">
    <subcellularLocation>
        <location evidence="1">Cytoplasm</location>
    </subcellularLocation>
</comment>
<comment type="similarity">
    <text evidence="1">Belongs to the RimP family.</text>
</comment>
<name>RIMP_ACTP7</name>